<protein>
    <recommendedName>
        <fullName evidence="9">Dipeptidyl peptidase 9</fullName>
        <shortName>DP9</shortName>
        <ecNumber evidence="3">3.4.14.5</ecNumber>
    </recommendedName>
    <alternativeName>
        <fullName>Dipeptidyl peptidase IX</fullName>
        <shortName>DPP IX</shortName>
    </alternativeName>
    <alternativeName>
        <fullName>Dipeptidyl peptidase-like protein 9</fullName>
        <shortName>DPLP9</shortName>
    </alternativeName>
</protein>
<comment type="function">
    <text evidence="2 3 4 6">Dipeptidyl peptidase that cleaves off N-terminal dipeptides from proteins having a Pro or Ala residue at position 2 (PubMed:24223149). Acts as a key inhibitor of caspase-1-dependent monocyte and macrophage pyroptosis in resting cells by preventing activation of NLRP1 and CARD8 (PubMed:27820798, PubMed:29396289). Sequesters the cleaved C-terminal part of NLRP1 and CARD8, which respectively constitute the active part of the NLRP1 and CARD8 inflammasomes, in a ternary complex, thereby preventing their oligomerization and activation (By similarity). The dipeptidyl peptidase activity is required to suppress NLRP1 and CARD8; however, neither NLRP1 nor CARD8 are bona fide substrates of DPP9, suggesting the existence of substrate(s) required for NLRP1 and CARD8 inhibition (By similarity).</text>
</comment>
<comment type="catalytic activity">
    <reaction evidence="3">
        <text>Release of an N-terminal dipeptide, Xaa-Yaa-|-Zaa-, from a polypeptide, preferentially when Yaa is Pro, provided Zaa is neither Pro nor hydroxyproline.</text>
        <dbReference type="EC" id="3.4.14.5"/>
    </reaction>
</comment>
<comment type="activity regulation">
    <text evidence="2 4 6">Inhibited by the serine proteinase inhibitor 4-(2-aminoethyl)benzenesulphonyl fluoride (AEBSF), and by di-isopropylfluorophosphate (By similarity). Inhibited by Val-boroPro (Talabostat, PT-100), a non-selective inhibitor, which triggers pyroptosis in monocytes and macrophages (PubMed:27820798, PubMed:29396289). Val-boroPro inhibits activity by binding to the active site, mimicking a substrate-bound state, thereby displacing the C-terminal fragment of NLRP1, leading to activation of the NLRP1 inflammasome. In contrast, Val-boroPro does not directly displaces CARD8: it acts by promoting degradation of the N-terminal part of CARD8, leading to indirect disruption of the ternary complex (By similarity).</text>
</comment>
<comment type="subunit">
    <text evidence="2">Homodimer. Forms a ternary complex with NLRP1, composed of a DPP9 homodimer, one full-length NLRP1 protein, and one cleaved C-terminus of NLRP1 (NACHT, LRR and PYD domains-containing protein 1, C-terminus). Forms a ternary complex with CARD8, composed of a DPP9 homodimer, one full-length NLRP1 protein, and one cleaved C-terminus of CARD8 (Caspase recruitment domain-containing protein 8, C-terminus). In the ternary complex, only one subunit of the DPP9 homodimer is bound to NLRP1 or CARD8.</text>
</comment>
<comment type="subcellular location">
    <subcellularLocation>
        <location evidence="3">Cytoplasm</location>
        <location evidence="3">Cytosol</location>
    </subcellularLocation>
</comment>
<comment type="alternative products">
    <event type="alternative splicing"/>
    <isoform>
        <id>Q8BVG4-1</id>
        <name>1</name>
        <sequence type="displayed"/>
    </isoform>
    <isoform>
        <id>Q8BVG4-2</id>
        <name>2</name>
        <sequence type="described" ref="VSP_013870 VSP_013871 VSP_013872"/>
    </isoform>
</comment>
<comment type="tissue specificity">
    <text evidence="3 5">Detected in kidney, skin, brain, thymus and liver (at protein level).</text>
</comment>
<comment type="developmental stage">
    <text evidence="5">Detected in hypoglossal cord and first branchial arch at 10.75 dpc (at protein level).</text>
</comment>
<comment type="similarity">
    <text evidence="10">Belongs to the peptidase S9B family. DPPIV subfamily.</text>
</comment>
<comment type="sequence caution" evidence="10">
    <conflict type="frameshift">
        <sequence resource="EMBL-CDS" id="BAD21428"/>
    </conflict>
</comment>
<reference key="1">
    <citation type="journal article" date="2005" name="Science">
        <title>The transcriptional landscape of the mammalian genome.</title>
        <authorList>
            <person name="Carninci P."/>
            <person name="Kasukawa T."/>
            <person name="Katayama S."/>
            <person name="Gough J."/>
            <person name="Frith M.C."/>
            <person name="Maeda N."/>
            <person name="Oyama R."/>
            <person name="Ravasi T."/>
            <person name="Lenhard B."/>
            <person name="Wells C."/>
            <person name="Kodzius R."/>
            <person name="Shimokawa K."/>
            <person name="Bajic V.B."/>
            <person name="Brenner S.E."/>
            <person name="Batalov S."/>
            <person name="Forrest A.R."/>
            <person name="Zavolan M."/>
            <person name="Davis M.J."/>
            <person name="Wilming L.G."/>
            <person name="Aidinis V."/>
            <person name="Allen J.E."/>
            <person name="Ambesi-Impiombato A."/>
            <person name="Apweiler R."/>
            <person name="Aturaliya R.N."/>
            <person name="Bailey T.L."/>
            <person name="Bansal M."/>
            <person name="Baxter L."/>
            <person name="Beisel K.W."/>
            <person name="Bersano T."/>
            <person name="Bono H."/>
            <person name="Chalk A.M."/>
            <person name="Chiu K.P."/>
            <person name="Choudhary V."/>
            <person name="Christoffels A."/>
            <person name="Clutterbuck D.R."/>
            <person name="Crowe M.L."/>
            <person name="Dalla E."/>
            <person name="Dalrymple B.P."/>
            <person name="de Bono B."/>
            <person name="Della Gatta G."/>
            <person name="di Bernardo D."/>
            <person name="Down T."/>
            <person name="Engstrom P."/>
            <person name="Fagiolini M."/>
            <person name="Faulkner G."/>
            <person name="Fletcher C.F."/>
            <person name="Fukushima T."/>
            <person name="Furuno M."/>
            <person name="Futaki S."/>
            <person name="Gariboldi M."/>
            <person name="Georgii-Hemming P."/>
            <person name="Gingeras T.R."/>
            <person name="Gojobori T."/>
            <person name="Green R.E."/>
            <person name="Gustincich S."/>
            <person name="Harbers M."/>
            <person name="Hayashi Y."/>
            <person name="Hensch T.K."/>
            <person name="Hirokawa N."/>
            <person name="Hill D."/>
            <person name="Huminiecki L."/>
            <person name="Iacono M."/>
            <person name="Ikeo K."/>
            <person name="Iwama A."/>
            <person name="Ishikawa T."/>
            <person name="Jakt M."/>
            <person name="Kanapin A."/>
            <person name="Katoh M."/>
            <person name="Kawasawa Y."/>
            <person name="Kelso J."/>
            <person name="Kitamura H."/>
            <person name="Kitano H."/>
            <person name="Kollias G."/>
            <person name="Krishnan S.P."/>
            <person name="Kruger A."/>
            <person name="Kummerfeld S.K."/>
            <person name="Kurochkin I.V."/>
            <person name="Lareau L.F."/>
            <person name="Lazarevic D."/>
            <person name="Lipovich L."/>
            <person name="Liu J."/>
            <person name="Liuni S."/>
            <person name="McWilliam S."/>
            <person name="Madan Babu M."/>
            <person name="Madera M."/>
            <person name="Marchionni L."/>
            <person name="Matsuda H."/>
            <person name="Matsuzawa S."/>
            <person name="Miki H."/>
            <person name="Mignone F."/>
            <person name="Miyake S."/>
            <person name="Morris K."/>
            <person name="Mottagui-Tabar S."/>
            <person name="Mulder N."/>
            <person name="Nakano N."/>
            <person name="Nakauchi H."/>
            <person name="Ng P."/>
            <person name="Nilsson R."/>
            <person name="Nishiguchi S."/>
            <person name="Nishikawa S."/>
            <person name="Nori F."/>
            <person name="Ohara O."/>
            <person name="Okazaki Y."/>
            <person name="Orlando V."/>
            <person name="Pang K.C."/>
            <person name="Pavan W.J."/>
            <person name="Pavesi G."/>
            <person name="Pesole G."/>
            <person name="Petrovsky N."/>
            <person name="Piazza S."/>
            <person name="Reed J."/>
            <person name="Reid J.F."/>
            <person name="Ring B.Z."/>
            <person name="Ringwald M."/>
            <person name="Rost B."/>
            <person name="Ruan Y."/>
            <person name="Salzberg S.L."/>
            <person name="Sandelin A."/>
            <person name="Schneider C."/>
            <person name="Schoenbach C."/>
            <person name="Sekiguchi K."/>
            <person name="Semple C.A."/>
            <person name="Seno S."/>
            <person name="Sessa L."/>
            <person name="Sheng Y."/>
            <person name="Shibata Y."/>
            <person name="Shimada H."/>
            <person name="Shimada K."/>
            <person name="Silva D."/>
            <person name="Sinclair B."/>
            <person name="Sperling S."/>
            <person name="Stupka E."/>
            <person name="Sugiura K."/>
            <person name="Sultana R."/>
            <person name="Takenaka Y."/>
            <person name="Taki K."/>
            <person name="Tammoja K."/>
            <person name="Tan S.L."/>
            <person name="Tang S."/>
            <person name="Taylor M.S."/>
            <person name="Tegner J."/>
            <person name="Teichmann S.A."/>
            <person name="Ueda H.R."/>
            <person name="van Nimwegen E."/>
            <person name="Verardo R."/>
            <person name="Wei C.L."/>
            <person name="Yagi K."/>
            <person name="Yamanishi H."/>
            <person name="Zabarovsky E."/>
            <person name="Zhu S."/>
            <person name="Zimmer A."/>
            <person name="Hide W."/>
            <person name="Bult C."/>
            <person name="Grimmond S.M."/>
            <person name="Teasdale R.D."/>
            <person name="Liu E.T."/>
            <person name="Brusic V."/>
            <person name="Quackenbush J."/>
            <person name="Wahlestedt C."/>
            <person name="Mattick J.S."/>
            <person name="Hume D.A."/>
            <person name="Kai C."/>
            <person name="Sasaki D."/>
            <person name="Tomaru Y."/>
            <person name="Fukuda S."/>
            <person name="Kanamori-Katayama M."/>
            <person name="Suzuki M."/>
            <person name="Aoki J."/>
            <person name="Arakawa T."/>
            <person name="Iida J."/>
            <person name="Imamura K."/>
            <person name="Itoh M."/>
            <person name="Kato T."/>
            <person name="Kawaji H."/>
            <person name="Kawagashira N."/>
            <person name="Kawashima T."/>
            <person name="Kojima M."/>
            <person name="Kondo S."/>
            <person name="Konno H."/>
            <person name="Nakano K."/>
            <person name="Ninomiya N."/>
            <person name="Nishio T."/>
            <person name="Okada M."/>
            <person name="Plessy C."/>
            <person name="Shibata K."/>
            <person name="Shiraki T."/>
            <person name="Suzuki S."/>
            <person name="Tagami M."/>
            <person name="Waki K."/>
            <person name="Watahiki A."/>
            <person name="Okamura-Oho Y."/>
            <person name="Suzuki H."/>
            <person name="Kawai J."/>
            <person name="Hayashizaki Y."/>
        </authorList>
    </citation>
    <scope>NUCLEOTIDE SEQUENCE [LARGE SCALE MRNA] (ISOFORM 1)</scope>
    <source>
        <strain>C57BL/6J</strain>
        <tissue>Liver</tissue>
        <tissue>Olfactory bulb</tissue>
    </source>
</reference>
<reference key="2">
    <citation type="journal article" date="2004" name="DNA Res.">
        <title>Prediction of the coding sequences of mouse homologues of FLJ genes: the complete nucleotide sequences of 110 mouse FLJ-homologous cDNAs identified by screening of terminal sequences of cDNA clones randomly sampled from size-fractionated libraries.</title>
        <authorList>
            <person name="Okazaki N."/>
            <person name="Kikuno R."/>
            <person name="Ohara R."/>
            <person name="Inamoto S."/>
            <person name="Koseki H."/>
            <person name="Hiraoka S."/>
            <person name="Saga Y."/>
            <person name="Kitamura H."/>
            <person name="Nakagawa T."/>
            <person name="Nagase T."/>
            <person name="Ohara O."/>
            <person name="Koga H."/>
        </authorList>
    </citation>
    <scope>NUCLEOTIDE SEQUENCE [LARGE SCALE MRNA] (ISOFORM 2)</scope>
    <source>
        <tissue>Thymus</tissue>
    </source>
</reference>
<reference key="3">
    <citation type="journal article" date="2004" name="Genome Res.">
        <title>The status, quality, and expansion of the NIH full-length cDNA project: the Mammalian Gene Collection (MGC).</title>
        <authorList>
            <consortium name="The MGC Project Team"/>
        </authorList>
    </citation>
    <scope>NUCLEOTIDE SEQUENCE [LARGE SCALE MRNA] (ISOFORM 1)</scope>
    <source>
        <strain>FVB/N</strain>
        <tissue>Salivary gland</tissue>
    </source>
</reference>
<reference key="4">
    <citation type="journal article" date="2010" name="Cell">
        <title>A tissue-specific atlas of mouse protein phosphorylation and expression.</title>
        <authorList>
            <person name="Huttlin E.L."/>
            <person name="Jedrychowski M.P."/>
            <person name="Elias J.E."/>
            <person name="Goswami T."/>
            <person name="Rad R."/>
            <person name="Beausoleil S.A."/>
            <person name="Villen J."/>
            <person name="Haas W."/>
            <person name="Sowa M.E."/>
            <person name="Gygi S.P."/>
        </authorList>
    </citation>
    <scope>IDENTIFICATION BY MASS SPECTROMETRY [LARGE SCALE ANALYSIS]</scope>
    <source>
        <tissue>Brain</tissue>
        <tissue>Heart</tissue>
        <tissue>Liver</tissue>
        <tissue>Lung</tissue>
        <tissue>Pancreas</tissue>
        <tissue>Spleen</tissue>
    </source>
</reference>
<reference key="5">
    <citation type="journal article" date="2013" name="PLoS ONE">
        <title>Targeted inactivation of dipeptidyl peptidase 9 enzymatic activity causes mouse neonate lethality.</title>
        <authorList>
            <person name="Gall M.G."/>
            <person name="Chen Y."/>
            <person name="Vieira de Ribeiro A.J."/>
            <person name="Zhang H."/>
            <person name="Bailey C.G."/>
            <person name="Spielman D.S."/>
            <person name="Yu D.M."/>
            <person name="Gorrell M.D."/>
        </authorList>
    </citation>
    <scope>FUNCTION</scope>
    <scope>CATALYTIC ACTIVITY</scope>
    <scope>MUTAGENESIS OF SER-729</scope>
    <scope>ACTIVE SITE</scope>
    <scope>SUBCELLULAR LOCATION</scope>
    <scope>TISSUE SPECIFICITY</scope>
</reference>
<reference key="6">
    <citation type="journal article" date="2017" name="Dev. Biol.">
        <title>DPP9 enzyme activity controls survival of mouse migratory tongue muscle progenitors and its absence leads to neonatal lethality due to suckling defect.</title>
        <authorList>
            <person name="Kim M."/>
            <person name="Minoux M."/>
            <person name="Piaia A."/>
            <person name="Kueng B."/>
            <person name="Gapp B."/>
            <person name="Weber D."/>
            <person name="Haller C."/>
            <person name="Barbieri S."/>
            <person name="Namoto K."/>
            <person name="Lorenz T."/>
            <person name="Wirsching J."/>
            <person name="Bassilana F."/>
            <person name="Dietrich W."/>
            <person name="Rijli F.M."/>
            <person name="Ksiazek I."/>
        </authorList>
    </citation>
    <scope>MUTAGENESIS OF SER-729</scope>
    <scope>ACTIVE SITE</scope>
    <scope>TISSUE SPECIFICITY</scope>
    <scope>DEVELOPMENTAL STAGE</scope>
</reference>
<reference key="7">
    <citation type="journal article" date="2017" name="Nat. Chem. Biol.">
        <title>DPP8 and DPP9 inhibition induces pro-caspase-1-dependent monocyte and macrophage pyroptosis.</title>
        <authorList>
            <person name="Okondo M.C."/>
            <person name="Johnson D.C."/>
            <person name="Sridharan R."/>
            <person name="Go E.B."/>
            <person name="Chui A.J."/>
            <person name="Wang M.S."/>
            <person name="Poplawski S.E."/>
            <person name="Wu W."/>
            <person name="Liu Y."/>
            <person name="Lai J.H."/>
            <person name="Sanford D.G."/>
            <person name="Arciprete M.O."/>
            <person name="Golub T.R."/>
            <person name="Bachovchin W.W."/>
            <person name="Bachovchin D.A."/>
        </authorList>
    </citation>
    <scope>FUNCTION</scope>
    <scope>ACTIVITY REGULATION</scope>
</reference>
<reference key="8">
    <citation type="journal article" date="2018" name="Cell Chem. Biol.">
        <title>Inhibition of Dpp8/9 activates the Nlrp1b inflammasome.</title>
        <authorList>
            <person name="Okondo M.C."/>
            <person name="Rao S.D."/>
            <person name="Taabazuing C.Y."/>
            <person name="Chui A.J."/>
            <person name="Poplawski S.E."/>
            <person name="Johnson D.C."/>
            <person name="Bachovchin D.A."/>
        </authorList>
    </citation>
    <scope>FUNCTION</scope>
    <scope>ACTIVITY REGULATION</scope>
</reference>
<reference key="9">
    <citation type="journal article" date="2022" name="Sci. Immunol.">
        <title>DPP9 deficiency: An inflammasomopathy that can be rescued by lowering NLRP1/IL-1 signaling.</title>
        <authorList>
            <person name="Harapas C.R."/>
            <person name="Robinson K.S."/>
            <person name="Lay K."/>
            <person name="Wong J."/>
            <person name="Moreno Traspas R."/>
            <person name="Nabavizadeh N."/>
            <person name="Rass-Rothschild A."/>
            <person name="Boisson B."/>
            <person name="Drutman S.B."/>
            <person name="Laohamonthonkul P."/>
            <person name="Bonner D."/>
            <person name="Xiong J.R."/>
            <person name="Gorrell M.D."/>
            <person name="Davidson S."/>
            <person name="Yu C.H."/>
            <person name="Fleming M.D."/>
            <person name="Gudera J."/>
            <person name="Stein J."/>
            <person name="Ben-Harosh M."/>
            <person name="Groopman E."/>
            <person name="Shimamura A."/>
            <person name="Tamary H."/>
            <person name="Kayserili H."/>
            <person name="Hatipoglu N."/>
            <person name="Casanova J.L."/>
            <person name="Bernstein J.A."/>
            <person name="Zhong F.L."/>
            <person name="Masters S.L."/>
            <person name="Reversade B."/>
        </authorList>
    </citation>
    <scope>MUTAGENESIS OF SER-729</scope>
</reference>
<keyword id="KW-0025">Alternative splicing</keyword>
<keyword id="KW-0031">Aminopeptidase</keyword>
<keyword id="KW-0963">Cytoplasm</keyword>
<keyword id="KW-0378">Hydrolase</keyword>
<keyword id="KW-0645">Protease</keyword>
<keyword id="KW-1185">Reference proteome</keyword>
<keyword id="KW-0720">Serine protease</keyword>
<feature type="chain" id="PRO_0000122416" description="Dipeptidyl peptidase 9">
    <location>
        <begin position="1"/>
        <end position="862"/>
    </location>
</feature>
<feature type="active site" description="Charge relay system" evidence="5 11">
    <location>
        <position position="729"/>
    </location>
</feature>
<feature type="active site" description="Charge relay system" evidence="1">
    <location>
        <position position="807"/>
    </location>
</feature>
<feature type="active site" description="Charge relay system" evidence="1">
    <location>
        <position position="839"/>
    </location>
</feature>
<feature type="binding site" description="covalent" evidence="2">
    <location>
        <position position="729"/>
    </location>
    <ligand>
        <name>Val-boroPro</name>
        <dbReference type="ChEBI" id="CHEBI:187904"/>
        <note>inhibitor</note>
    </ligand>
</feature>
<feature type="splice variant" id="VSP_013870" description="In isoform 2." evidence="8">
    <location>
        <begin position="1"/>
        <end position="75"/>
    </location>
</feature>
<feature type="splice variant" id="VSP_013871" description="In isoform 2." evidence="8">
    <original>VAIAGAPVTVWMAYDTGYTERYMDVPENNQQGYEAGSVAL</original>
    <variation>PPHEAESPSSLPATTDPRMASASSSMWEAKPGTPASEGQR</variation>
    <location>
        <begin position="748"/>
        <end position="787"/>
    </location>
</feature>
<feature type="splice variant" id="VSP_013872" description="In isoform 2." evidence="8">
    <location>
        <begin position="788"/>
        <end position="862"/>
    </location>
</feature>
<feature type="mutagenesis site" description="Decreased levels of global dipeptidyl peptidase activity. Homozygous pups are born at the expected Mendelian rate and display no obvious morphological defects, but none survive to weaning. Homozygous pups display suckling defects and survive only when fed manually. The suckling defects are probably due to increased apoptosis of migratory tongue muscle progenitor cells, leading to defects in the development of intrinsic muscles in the distal tongue and decreased tongue size." evidence="3 5 7">
    <original>S</original>
    <variation>A</variation>
    <location>
        <position position="729"/>
    </location>
</feature>
<feature type="sequence conflict" description="In Ref. 1; BAC37211." evidence="10" ref="1">
    <original>D</original>
    <variation>Y</variation>
    <location>
        <position position="369"/>
    </location>
</feature>
<feature type="sequence conflict" description="In Ref. 2; BAD21428." evidence="10" ref="2">
    <original>S</original>
    <variation>F</variation>
    <location>
        <position position="546"/>
    </location>
</feature>
<feature type="sequence conflict" description="In Ref. 1; BAC37211." evidence="10" ref="1">
    <original>Q</original>
    <variation>K</variation>
    <location>
        <position position="777"/>
    </location>
</feature>
<dbReference type="EC" id="3.4.14.5" evidence="3"/>
<dbReference type="EMBL" id="AK050021">
    <property type="protein sequence ID" value="BAC34034.1"/>
    <property type="molecule type" value="mRNA"/>
</dbReference>
<dbReference type="EMBL" id="AK078301">
    <property type="protein sequence ID" value="BAC37211.1"/>
    <property type="molecule type" value="mRNA"/>
</dbReference>
<dbReference type="EMBL" id="AK131178">
    <property type="protein sequence ID" value="BAD21428.1"/>
    <property type="status" value="ALT_SEQ"/>
    <property type="molecule type" value="mRNA"/>
</dbReference>
<dbReference type="EMBL" id="BC057631">
    <property type="protein sequence ID" value="AAH57631.1"/>
    <property type="molecule type" value="mRNA"/>
</dbReference>
<dbReference type="CCDS" id="CCDS37663.1">
    <molecule id="Q8BVG4-1"/>
</dbReference>
<dbReference type="RefSeq" id="NP_766212.2">
    <molecule id="Q8BVG4-1"/>
    <property type="nucleotide sequence ID" value="NM_172624.3"/>
</dbReference>
<dbReference type="RefSeq" id="XP_006524218.1">
    <molecule id="Q8BVG4-1"/>
    <property type="nucleotide sequence ID" value="XM_006524155.5"/>
</dbReference>
<dbReference type="SMR" id="Q8BVG4"/>
<dbReference type="BioGRID" id="230336">
    <property type="interactions" value="8"/>
</dbReference>
<dbReference type="FunCoup" id="Q8BVG4">
    <property type="interactions" value="1831"/>
</dbReference>
<dbReference type="STRING" id="10090.ENSMUSP00000046604"/>
<dbReference type="ChEMBL" id="CHEMBL3259484"/>
<dbReference type="ESTHER" id="mouse-dpp9">
    <property type="family name" value="DPP4N_Peptidase_S9"/>
</dbReference>
<dbReference type="MEROPS" id="S09.019"/>
<dbReference type="GlyGen" id="Q8BVG4">
    <property type="glycosylation" value="1 site, 1 O-linked glycan (1 site)"/>
</dbReference>
<dbReference type="iPTMnet" id="Q8BVG4"/>
<dbReference type="PhosphoSitePlus" id="Q8BVG4"/>
<dbReference type="SwissPalm" id="Q8BVG4"/>
<dbReference type="jPOST" id="Q8BVG4"/>
<dbReference type="PaxDb" id="10090-ENSMUSP00000046604"/>
<dbReference type="PeptideAtlas" id="Q8BVG4"/>
<dbReference type="ProteomicsDB" id="277602">
    <molecule id="Q8BVG4-1"/>
</dbReference>
<dbReference type="ProteomicsDB" id="277603">
    <molecule id="Q8BVG4-2"/>
</dbReference>
<dbReference type="Pumba" id="Q8BVG4"/>
<dbReference type="Antibodypedia" id="23705">
    <property type="antibodies" value="405 antibodies from 28 providers"/>
</dbReference>
<dbReference type="DNASU" id="224897"/>
<dbReference type="Ensembl" id="ENSMUST00000038794.6">
    <molecule id="Q8BVG4-1"/>
    <property type="protein sequence ID" value="ENSMUSP00000046604.5"/>
    <property type="gene ID" value="ENSMUSG00000001229.10"/>
</dbReference>
<dbReference type="GeneID" id="224897"/>
<dbReference type="KEGG" id="mmu:224897"/>
<dbReference type="UCSC" id="uc008dbh.2">
    <molecule id="Q8BVG4-1"/>
    <property type="organism name" value="mouse"/>
</dbReference>
<dbReference type="AGR" id="MGI:2443967"/>
<dbReference type="CTD" id="91039"/>
<dbReference type="MGI" id="MGI:2443967">
    <property type="gene designation" value="Dpp9"/>
</dbReference>
<dbReference type="VEuPathDB" id="HostDB:ENSMUSG00000001229"/>
<dbReference type="eggNOG" id="KOG2281">
    <property type="taxonomic scope" value="Eukaryota"/>
</dbReference>
<dbReference type="GeneTree" id="ENSGT00940000158174"/>
<dbReference type="HOGENOM" id="CLU_006105_1_0_1"/>
<dbReference type="InParanoid" id="Q8BVG4"/>
<dbReference type="OMA" id="VTHMTPQ"/>
<dbReference type="PhylomeDB" id="Q8BVG4"/>
<dbReference type="TreeFam" id="TF313309"/>
<dbReference type="BioGRID-ORCS" id="224897">
    <property type="hits" value="7 hits in 77 CRISPR screens"/>
</dbReference>
<dbReference type="ChiTaRS" id="Dpp9">
    <property type="organism name" value="mouse"/>
</dbReference>
<dbReference type="PRO" id="PR:Q8BVG4"/>
<dbReference type="Proteomes" id="UP000000589">
    <property type="component" value="Chromosome 17"/>
</dbReference>
<dbReference type="RNAct" id="Q8BVG4">
    <property type="molecule type" value="protein"/>
</dbReference>
<dbReference type="Bgee" id="ENSMUSG00000001229">
    <property type="expression patterns" value="Expressed in dorsal pancreas and 228 other cell types or tissues"/>
</dbReference>
<dbReference type="GO" id="GO:0031252">
    <property type="term" value="C:cell leading edge"/>
    <property type="evidence" value="ECO:0007669"/>
    <property type="project" value="Ensembl"/>
</dbReference>
<dbReference type="GO" id="GO:0005829">
    <property type="term" value="C:cytosol"/>
    <property type="evidence" value="ECO:0007669"/>
    <property type="project" value="UniProtKB-SubCell"/>
</dbReference>
<dbReference type="GO" id="GO:0005874">
    <property type="term" value="C:microtubule"/>
    <property type="evidence" value="ECO:0007669"/>
    <property type="project" value="Ensembl"/>
</dbReference>
<dbReference type="GO" id="GO:0004177">
    <property type="term" value="F:aminopeptidase activity"/>
    <property type="evidence" value="ECO:0007669"/>
    <property type="project" value="UniProtKB-KW"/>
</dbReference>
<dbReference type="GO" id="GO:0008239">
    <property type="term" value="F:dipeptidyl-peptidase activity"/>
    <property type="evidence" value="ECO:0000250"/>
    <property type="project" value="UniProtKB"/>
</dbReference>
<dbReference type="GO" id="GO:0042802">
    <property type="term" value="F:identical protein binding"/>
    <property type="evidence" value="ECO:0007669"/>
    <property type="project" value="Ensembl"/>
</dbReference>
<dbReference type="GO" id="GO:0008236">
    <property type="term" value="F:serine-type peptidase activity"/>
    <property type="evidence" value="ECO:0007669"/>
    <property type="project" value="UniProtKB-KW"/>
</dbReference>
<dbReference type="GO" id="GO:0043069">
    <property type="term" value="P:negative regulation of programmed cell death"/>
    <property type="evidence" value="ECO:0007669"/>
    <property type="project" value="Ensembl"/>
</dbReference>
<dbReference type="GO" id="GO:0006508">
    <property type="term" value="P:proteolysis"/>
    <property type="evidence" value="ECO:0007669"/>
    <property type="project" value="UniProtKB-KW"/>
</dbReference>
<dbReference type="GO" id="GO:0070269">
    <property type="term" value="P:pyroptotic inflammatory response"/>
    <property type="evidence" value="ECO:0000250"/>
    <property type="project" value="UniProtKB"/>
</dbReference>
<dbReference type="FunFam" id="2.140.10.30:FF:000002">
    <property type="entry name" value="Dipeptidyl peptidase 8-like isoform"/>
    <property type="match status" value="1"/>
</dbReference>
<dbReference type="FunFam" id="3.40.50.1820:FF:000016">
    <property type="entry name" value="Dipeptidyl peptidase 8-like isoform"/>
    <property type="match status" value="1"/>
</dbReference>
<dbReference type="Gene3D" id="3.40.50.1820">
    <property type="entry name" value="alpha/beta hydrolase"/>
    <property type="match status" value="1"/>
</dbReference>
<dbReference type="Gene3D" id="2.140.10.30">
    <property type="entry name" value="Dipeptidylpeptidase IV, N-terminal domain"/>
    <property type="match status" value="1"/>
</dbReference>
<dbReference type="InterPro" id="IPR029058">
    <property type="entry name" value="AB_hydrolase_fold"/>
</dbReference>
<dbReference type="InterPro" id="IPR045785">
    <property type="entry name" value="Dpp_8/9_N"/>
</dbReference>
<dbReference type="InterPro" id="IPR001375">
    <property type="entry name" value="Peptidase_S9_cat"/>
</dbReference>
<dbReference type="InterPro" id="IPR002469">
    <property type="entry name" value="Peptidase_S9B_N"/>
</dbReference>
<dbReference type="InterPro" id="IPR050278">
    <property type="entry name" value="Serine_Prot_S9B/DPPIV"/>
</dbReference>
<dbReference type="PANTHER" id="PTHR11731:SF109">
    <property type="entry name" value="DIPEPTIDYL PEPTIDASE 9"/>
    <property type="match status" value="1"/>
</dbReference>
<dbReference type="PANTHER" id="PTHR11731">
    <property type="entry name" value="PROTEASE FAMILY S9B,C DIPEPTIDYL-PEPTIDASE IV-RELATED"/>
    <property type="match status" value="1"/>
</dbReference>
<dbReference type="Pfam" id="PF19520">
    <property type="entry name" value="Dpp_8_9_N"/>
    <property type="match status" value="1"/>
</dbReference>
<dbReference type="Pfam" id="PF00930">
    <property type="entry name" value="DPPIV_N"/>
    <property type="match status" value="1"/>
</dbReference>
<dbReference type="Pfam" id="PF00326">
    <property type="entry name" value="Peptidase_S9"/>
    <property type="match status" value="1"/>
</dbReference>
<dbReference type="SUPFAM" id="SSF53474">
    <property type="entry name" value="alpha/beta-Hydrolases"/>
    <property type="match status" value="1"/>
</dbReference>
<dbReference type="SUPFAM" id="SSF82171">
    <property type="entry name" value="DPP6 N-terminal domain-like"/>
    <property type="match status" value="1"/>
</dbReference>
<sequence>MCSGVSPVEQVAAGDMDDTAARFCVQKHSWDGLRSIIHGSRKSSGLIVSKAPHDFQFVQKPDESGPHSHRLYYLGMPYGSRENSLLYSEIPKKVRKEALLLLSWKQMLDHFQATPHHGVYSREEELLRERKRLGVFGITSYDFHSESGLFLFQASNSLFHCRDGGKNGFMVSPMKPLEIKTQCSGPRMDPKICPADPAFFSFINNSDLWVANIETGEERRLTFCHQGSAGVLDNPKSAGVATFVIQEEFDRFTGCWWCPTASWEGSEGLKTLRILYEEVDESEVEVIHVPSPALEERKTDSYRYPRTGSKNPKIALKLAELQTDHQGKIVSSCEKELVQPFSSLFPKVEYIARAGWTRDGKYAWAMFLDRPQQRLQLVLLPPALFIPAVESEAQRQAAARAVPKNVQPFVIYEEVTNVWINVHDIFHPFPQAEGQQDFCFLRANECKTGFCHLYRVTVELKTKDYDWTEPLSPTEDEFKCPIKEEVALTSGEWEVLSRHGSKIWVNEQTKLVYFQGTKDTPLEHHLYVVSYESAGEIVRLTTLGFSHSCSMSQSFDMFVSHYSSVSTPPCVHVYKLSGPDDDPLHKQPRFWASMMEAANCPPDYVPPEIFHFHTRADVQLYGMIYKPHTLQPGRKHPTVLFVYGGPQVQLVNNSFKGIKYLRLNTLASLGYAVVVIDGRGSCQRGLHFEGALKNQMGQVEIEDQVEGLQYVAEKYGFIDLSRVAIHGWSYGGFLSLMGLIHKPQVFKVAIAGAPVTVWMAYDTGYTERYMDVPENNQQGYEAGSVALHVEKLPNEPNRLLILHGFLDENVHFFHTNFLVSQLIRAGKPYQLQIYPNERHSIRCRESGEHYEVTLLHFLQEHL</sequence>
<accession>Q8BVG4</accession>
<accession>Q6KAM9</accession>
<accession>Q8BWT9</accession>
<evidence type="ECO:0000250" key="1">
    <source>
        <dbReference type="UniProtKB" id="Q6V1X1"/>
    </source>
</evidence>
<evidence type="ECO:0000250" key="2">
    <source>
        <dbReference type="UniProtKB" id="Q86TI2"/>
    </source>
</evidence>
<evidence type="ECO:0000269" key="3">
    <source>
    </source>
</evidence>
<evidence type="ECO:0000269" key="4">
    <source>
    </source>
</evidence>
<evidence type="ECO:0000269" key="5">
    <source>
    </source>
</evidence>
<evidence type="ECO:0000269" key="6">
    <source>
    </source>
</evidence>
<evidence type="ECO:0000269" key="7">
    <source>
    </source>
</evidence>
<evidence type="ECO:0000303" key="8">
    <source>
    </source>
</evidence>
<evidence type="ECO:0000303" key="9">
    <source>
    </source>
</evidence>
<evidence type="ECO:0000305" key="10"/>
<evidence type="ECO:0000305" key="11">
    <source>
    </source>
</evidence>
<evidence type="ECO:0000312" key="12">
    <source>
        <dbReference type="MGI" id="MGI:2443967"/>
    </source>
</evidence>
<proteinExistence type="evidence at protein level"/>
<gene>
    <name evidence="9 12" type="primary">Dpp9</name>
</gene>
<name>DPP9_MOUSE</name>
<organism>
    <name type="scientific">Mus musculus</name>
    <name type="common">Mouse</name>
    <dbReference type="NCBI Taxonomy" id="10090"/>
    <lineage>
        <taxon>Eukaryota</taxon>
        <taxon>Metazoa</taxon>
        <taxon>Chordata</taxon>
        <taxon>Craniata</taxon>
        <taxon>Vertebrata</taxon>
        <taxon>Euteleostomi</taxon>
        <taxon>Mammalia</taxon>
        <taxon>Eutheria</taxon>
        <taxon>Euarchontoglires</taxon>
        <taxon>Glires</taxon>
        <taxon>Rodentia</taxon>
        <taxon>Myomorpha</taxon>
        <taxon>Muroidea</taxon>
        <taxon>Muridae</taxon>
        <taxon>Murinae</taxon>
        <taxon>Mus</taxon>
        <taxon>Mus</taxon>
    </lineage>
</organism>